<accession>Q8ZN60</accession>
<name>GUAA_SALTY</name>
<feature type="chain" id="PRO_0000140171" description="GMP synthase [glutamine-hydrolyzing]">
    <location>
        <begin position="1"/>
        <end position="525"/>
    </location>
</feature>
<feature type="domain" description="Glutamine amidotransferase type-1" evidence="1">
    <location>
        <begin position="9"/>
        <end position="207"/>
    </location>
</feature>
<feature type="domain" description="GMPS ATP-PPase" evidence="1">
    <location>
        <begin position="208"/>
        <end position="400"/>
    </location>
</feature>
<feature type="active site" description="Nucleophile" evidence="1">
    <location>
        <position position="86"/>
    </location>
</feature>
<feature type="active site" evidence="1">
    <location>
        <position position="181"/>
    </location>
</feature>
<feature type="active site" evidence="1">
    <location>
        <position position="183"/>
    </location>
</feature>
<feature type="binding site" evidence="1">
    <location>
        <begin position="235"/>
        <end position="241"/>
    </location>
    <ligand>
        <name>ATP</name>
        <dbReference type="ChEBI" id="CHEBI:30616"/>
    </ligand>
</feature>
<organism>
    <name type="scientific">Salmonella typhimurium (strain LT2 / SGSC1412 / ATCC 700720)</name>
    <dbReference type="NCBI Taxonomy" id="99287"/>
    <lineage>
        <taxon>Bacteria</taxon>
        <taxon>Pseudomonadati</taxon>
        <taxon>Pseudomonadota</taxon>
        <taxon>Gammaproteobacteria</taxon>
        <taxon>Enterobacterales</taxon>
        <taxon>Enterobacteriaceae</taxon>
        <taxon>Salmonella</taxon>
    </lineage>
</organism>
<sequence>MTENIHKHRILILDFGSQYTQLVARRVRELGVYCELWAWDVTEAQIRDFNPSGIILSGGPESTTEENSPRALQYVFEAGVPVFGVCYGMQTMAMQLGGHVEGSNEREFGYAQVEVLTDSALVRGIEDSLTADGKPLLDVWMSHGDKVTAIPSDFVTVASTESCPFAIMANEEKRFYGVQFHPEVTHTRQGMRMLERFVRDICQCEALWTPAKIIDDAVARIREQVGDDKVILGLSGGVDSSVTAMLLHRAIGKNLTCVFVDNGLLRLNEAEQVMDMFGDHFGLNIVHVPAEERFLSALAGENDPEAKRKIIGRVFVEVFDEEALKLEDVKWLAQGTIYPDVIESAASATGKAHVIKSHHNVGGLPKEMKMGLVEPLKELFKDEVRKIGLELGLPYDMLYRHPFPGPGLGVRVLGEVKKEYCDLLRRADAIFIEELRKADLYDKVSQAFTVFLPVRSVGVMGDGRKYDWVVSLRAVETIDFMTAHWAHLPYDFLGRVSNRIINEVNGISRVVYDISGKPPATIEWE</sequence>
<reference key="1">
    <citation type="journal article" date="2001" name="Nature">
        <title>Complete genome sequence of Salmonella enterica serovar Typhimurium LT2.</title>
        <authorList>
            <person name="McClelland M."/>
            <person name="Sanderson K.E."/>
            <person name="Spieth J."/>
            <person name="Clifton S.W."/>
            <person name="Latreille P."/>
            <person name="Courtney L."/>
            <person name="Porwollik S."/>
            <person name="Ali J."/>
            <person name="Dante M."/>
            <person name="Du F."/>
            <person name="Hou S."/>
            <person name="Layman D."/>
            <person name="Leonard S."/>
            <person name="Nguyen C."/>
            <person name="Scott K."/>
            <person name="Holmes A."/>
            <person name="Grewal N."/>
            <person name="Mulvaney E."/>
            <person name="Ryan E."/>
            <person name="Sun H."/>
            <person name="Florea L."/>
            <person name="Miller W."/>
            <person name="Stoneking T."/>
            <person name="Nhan M."/>
            <person name="Waterston R."/>
            <person name="Wilson R.K."/>
        </authorList>
    </citation>
    <scope>NUCLEOTIDE SEQUENCE [LARGE SCALE GENOMIC DNA]</scope>
    <source>
        <strain>LT2 / SGSC1412 / ATCC 700720</strain>
    </source>
</reference>
<protein>
    <recommendedName>
        <fullName evidence="1">GMP synthase [glutamine-hydrolyzing]</fullName>
        <ecNumber evidence="1">6.3.5.2</ecNumber>
    </recommendedName>
    <alternativeName>
        <fullName evidence="1">GMP synthetase</fullName>
    </alternativeName>
    <alternativeName>
        <fullName evidence="1">Glutamine amidotransferase</fullName>
    </alternativeName>
</protein>
<evidence type="ECO:0000255" key="1">
    <source>
        <dbReference type="HAMAP-Rule" id="MF_00344"/>
    </source>
</evidence>
<dbReference type="EC" id="6.3.5.2" evidence="1"/>
<dbReference type="EMBL" id="AE006468">
    <property type="protein sequence ID" value="AAL21404.1"/>
    <property type="molecule type" value="Genomic_DNA"/>
</dbReference>
<dbReference type="RefSeq" id="NP_461445.1">
    <property type="nucleotide sequence ID" value="NC_003197.2"/>
</dbReference>
<dbReference type="RefSeq" id="WP_000138256.1">
    <property type="nucleotide sequence ID" value="NC_003197.2"/>
</dbReference>
<dbReference type="SMR" id="Q8ZN60"/>
<dbReference type="STRING" id="99287.STM2510"/>
<dbReference type="PaxDb" id="99287-STM2510"/>
<dbReference type="GeneID" id="1254032"/>
<dbReference type="KEGG" id="stm:STM2510"/>
<dbReference type="PATRIC" id="fig|99287.12.peg.2646"/>
<dbReference type="HOGENOM" id="CLU_014340_0_5_6"/>
<dbReference type="PhylomeDB" id="Q8ZN60"/>
<dbReference type="BioCyc" id="SENT99287:STM2510-MONOMER"/>
<dbReference type="UniPathway" id="UPA00189">
    <property type="reaction ID" value="UER00296"/>
</dbReference>
<dbReference type="Proteomes" id="UP000001014">
    <property type="component" value="Chromosome"/>
</dbReference>
<dbReference type="GO" id="GO:0005829">
    <property type="term" value="C:cytosol"/>
    <property type="evidence" value="ECO:0000318"/>
    <property type="project" value="GO_Central"/>
</dbReference>
<dbReference type="GO" id="GO:0005524">
    <property type="term" value="F:ATP binding"/>
    <property type="evidence" value="ECO:0007669"/>
    <property type="project" value="UniProtKB-UniRule"/>
</dbReference>
<dbReference type="GO" id="GO:0003921">
    <property type="term" value="F:GMP synthase activity"/>
    <property type="evidence" value="ECO:0000318"/>
    <property type="project" value="GO_Central"/>
</dbReference>
<dbReference type="GO" id="GO:0006177">
    <property type="term" value="P:GMP biosynthetic process"/>
    <property type="evidence" value="ECO:0000318"/>
    <property type="project" value="GO_Central"/>
</dbReference>
<dbReference type="CDD" id="cd01742">
    <property type="entry name" value="GATase1_GMP_Synthase"/>
    <property type="match status" value="1"/>
</dbReference>
<dbReference type="CDD" id="cd01997">
    <property type="entry name" value="GMP_synthase_C"/>
    <property type="match status" value="1"/>
</dbReference>
<dbReference type="FunFam" id="3.30.300.10:FF:000002">
    <property type="entry name" value="GMP synthase [glutamine-hydrolyzing]"/>
    <property type="match status" value="1"/>
</dbReference>
<dbReference type="FunFam" id="3.40.50.620:FF:000001">
    <property type="entry name" value="GMP synthase [glutamine-hydrolyzing]"/>
    <property type="match status" value="1"/>
</dbReference>
<dbReference type="FunFam" id="3.40.50.880:FF:000001">
    <property type="entry name" value="GMP synthase [glutamine-hydrolyzing]"/>
    <property type="match status" value="1"/>
</dbReference>
<dbReference type="Gene3D" id="3.30.300.10">
    <property type="match status" value="1"/>
</dbReference>
<dbReference type="Gene3D" id="3.40.50.880">
    <property type="match status" value="1"/>
</dbReference>
<dbReference type="Gene3D" id="3.40.50.620">
    <property type="entry name" value="HUPs"/>
    <property type="match status" value="1"/>
</dbReference>
<dbReference type="HAMAP" id="MF_00344">
    <property type="entry name" value="GMP_synthase"/>
    <property type="match status" value="1"/>
</dbReference>
<dbReference type="InterPro" id="IPR029062">
    <property type="entry name" value="Class_I_gatase-like"/>
</dbReference>
<dbReference type="InterPro" id="IPR017926">
    <property type="entry name" value="GATASE"/>
</dbReference>
<dbReference type="InterPro" id="IPR001674">
    <property type="entry name" value="GMP_synth_C"/>
</dbReference>
<dbReference type="InterPro" id="IPR004739">
    <property type="entry name" value="GMP_synth_GATase"/>
</dbReference>
<dbReference type="InterPro" id="IPR022955">
    <property type="entry name" value="GMP_synthase"/>
</dbReference>
<dbReference type="InterPro" id="IPR025777">
    <property type="entry name" value="GMPS_ATP_PPase_dom"/>
</dbReference>
<dbReference type="InterPro" id="IPR022310">
    <property type="entry name" value="NAD/GMP_synthase"/>
</dbReference>
<dbReference type="InterPro" id="IPR014729">
    <property type="entry name" value="Rossmann-like_a/b/a_fold"/>
</dbReference>
<dbReference type="NCBIfam" id="TIGR00884">
    <property type="entry name" value="guaA_Cterm"/>
    <property type="match status" value="1"/>
</dbReference>
<dbReference type="NCBIfam" id="TIGR00888">
    <property type="entry name" value="guaA_Nterm"/>
    <property type="match status" value="1"/>
</dbReference>
<dbReference type="NCBIfam" id="NF000848">
    <property type="entry name" value="PRK00074.1"/>
    <property type="match status" value="1"/>
</dbReference>
<dbReference type="PANTHER" id="PTHR11922:SF2">
    <property type="entry name" value="GMP SYNTHASE [GLUTAMINE-HYDROLYZING]"/>
    <property type="match status" value="1"/>
</dbReference>
<dbReference type="PANTHER" id="PTHR11922">
    <property type="entry name" value="GMP SYNTHASE-RELATED"/>
    <property type="match status" value="1"/>
</dbReference>
<dbReference type="Pfam" id="PF00117">
    <property type="entry name" value="GATase"/>
    <property type="match status" value="1"/>
</dbReference>
<dbReference type="Pfam" id="PF00958">
    <property type="entry name" value="GMP_synt_C"/>
    <property type="match status" value="1"/>
</dbReference>
<dbReference type="Pfam" id="PF02540">
    <property type="entry name" value="NAD_synthase"/>
    <property type="match status" value="1"/>
</dbReference>
<dbReference type="PRINTS" id="PR00097">
    <property type="entry name" value="ANTSNTHASEII"/>
</dbReference>
<dbReference type="PRINTS" id="PR00099">
    <property type="entry name" value="CPSGATASE"/>
</dbReference>
<dbReference type="PRINTS" id="PR00096">
    <property type="entry name" value="GATASE"/>
</dbReference>
<dbReference type="SUPFAM" id="SSF52402">
    <property type="entry name" value="Adenine nucleotide alpha hydrolases-like"/>
    <property type="match status" value="1"/>
</dbReference>
<dbReference type="SUPFAM" id="SSF52317">
    <property type="entry name" value="Class I glutamine amidotransferase-like"/>
    <property type="match status" value="1"/>
</dbReference>
<dbReference type="SUPFAM" id="SSF54810">
    <property type="entry name" value="GMP synthetase C-terminal dimerisation domain"/>
    <property type="match status" value="1"/>
</dbReference>
<dbReference type="PROSITE" id="PS51273">
    <property type="entry name" value="GATASE_TYPE_1"/>
    <property type="match status" value="1"/>
</dbReference>
<dbReference type="PROSITE" id="PS51553">
    <property type="entry name" value="GMPS_ATP_PPASE"/>
    <property type="match status" value="1"/>
</dbReference>
<comment type="function">
    <text evidence="1">Catalyzes the synthesis of GMP from XMP.</text>
</comment>
<comment type="catalytic activity">
    <reaction evidence="1">
        <text>XMP + L-glutamine + ATP + H2O = GMP + L-glutamate + AMP + diphosphate + 2 H(+)</text>
        <dbReference type="Rhea" id="RHEA:11680"/>
        <dbReference type="ChEBI" id="CHEBI:15377"/>
        <dbReference type="ChEBI" id="CHEBI:15378"/>
        <dbReference type="ChEBI" id="CHEBI:29985"/>
        <dbReference type="ChEBI" id="CHEBI:30616"/>
        <dbReference type="ChEBI" id="CHEBI:33019"/>
        <dbReference type="ChEBI" id="CHEBI:57464"/>
        <dbReference type="ChEBI" id="CHEBI:58115"/>
        <dbReference type="ChEBI" id="CHEBI:58359"/>
        <dbReference type="ChEBI" id="CHEBI:456215"/>
        <dbReference type="EC" id="6.3.5.2"/>
    </reaction>
</comment>
<comment type="pathway">
    <text evidence="1">Purine metabolism; GMP biosynthesis; GMP from XMP (L-Gln route): step 1/1.</text>
</comment>
<comment type="subunit">
    <text evidence="1">Homodimer.</text>
</comment>
<gene>
    <name evidence="1" type="primary">guaA</name>
    <name type="ordered locus">STM2510</name>
</gene>
<proteinExistence type="inferred from homology"/>
<keyword id="KW-0067">ATP-binding</keyword>
<keyword id="KW-0315">Glutamine amidotransferase</keyword>
<keyword id="KW-0332">GMP biosynthesis</keyword>
<keyword id="KW-0436">Ligase</keyword>
<keyword id="KW-0547">Nucleotide-binding</keyword>
<keyword id="KW-0658">Purine biosynthesis</keyword>
<keyword id="KW-1185">Reference proteome</keyword>